<sequence>MLMPKRTKFRKQMKGRNRGYATRGASLATGEFALKAVEAGRVNSRQIEAARQALTRHVKRQAKIWIRVFPDKPLTKKPLQTRMGKGKAGVEEWVMNIKPGRIIFEMAGVDEELAREALTLALHKLPFKSKFVTRESENEIY</sequence>
<gene>
    <name evidence="1" type="primary">rplP</name>
    <name type="ordered locus">Ccon26_18780</name>
    <name type="ORF">CCC13826_1770</name>
</gene>
<proteinExistence type="inferred from homology"/>
<name>RL16_CAMC1</name>
<reference key="1">
    <citation type="submission" date="2007-10" db="EMBL/GenBank/DDBJ databases">
        <title>Genome sequence of Campylobacter concisus 13826 isolated from human feces.</title>
        <authorList>
            <person name="Fouts D.E."/>
            <person name="Mongodin E.F."/>
            <person name="Puiu D."/>
            <person name="Sebastian Y."/>
            <person name="Miller W.G."/>
            <person name="Mandrell R.E."/>
            <person name="On S."/>
            <person name="Nelson K.E."/>
        </authorList>
    </citation>
    <scope>NUCLEOTIDE SEQUENCE [LARGE SCALE GENOMIC DNA]</scope>
    <source>
        <strain>13826</strain>
    </source>
</reference>
<keyword id="KW-0687">Ribonucleoprotein</keyword>
<keyword id="KW-0689">Ribosomal protein</keyword>
<keyword id="KW-0694">RNA-binding</keyword>
<keyword id="KW-0699">rRNA-binding</keyword>
<keyword id="KW-0820">tRNA-binding</keyword>
<dbReference type="EMBL" id="CP000792">
    <property type="protein sequence ID" value="EAT98136.1"/>
    <property type="molecule type" value="Genomic_DNA"/>
</dbReference>
<dbReference type="RefSeq" id="WP_002941572.1">
    <property type="nucleotide sequence ID" value="NC_009802.2"/>
</dbReference>
<dbReference type="SMR" id="A7ZG05"/>
<dbReference type="STRING" id="360104.CCC13826_1770"/>
<dbReference type="KEGG" id="cco:CCC13826_1770"/>
<dbReference type="eggNOG" id="COG0197">
    <property type="taxonomic scope" value="Bacteria"/>
</dbReference>
<dbReference type="HOGENOM" id="CLU_078858_2_1_7"/>
<dbReference type="OrthoDB" id="9802589at2"/>
<dbReference type="Proteomes" id="UP000001121">
    <property type="component" value="Chromosome"/>
</dbReference>
<dbReference type="GO" id="GO:0022625">
    <property type="term" value="C:cytosolic large ribosomal subunit"/>
    <property type="evidence" value="ECO:0007669"/>
    <property type="project" value="TreeGrafter"/>
</dbReference>
<dbReference type="GO" id="GO:0019843">
    <property type="term" value="F:rRNA binding"/>
    <property type="evidence" value="ECO:0007669"/>
    <property type="project" value="UniProtKB-UniRule"/>
</dbReference>
<dbReference type="GO" id="GO:0003735">
    <property type="term" value="F:structural constituent of ribosome"/>
    <property type="evidence" value="ECO:0007669"/>
    <property type="project" value="InterPro"/>
</dbReference>
<dbReference type="GO" id="GO:0000049">
    <property type="term" value="F:tRNA binding"/>
    <property type="evidence" value="ECO:0007669"/>
    <property type="project" value="UniProtKB-KW"/>
</dbReference>
<dbReference type="GO" id="GO:0006412">
    <property type="term" value="P:translation"/>
    <property type="evidence" value="ECO:0007669"/>
    <property type="project" value="UniProtKB-UniRule"/>
</dbReference>
<dbReference type="CDD" id="cd01433">
    <property type="entry name" value="Ribosomal_L16_L10e"/>
    <property type="match status" value="1"/>
</dbReference>
<dbReference type="FunFam" id="3.90.1170.10:FF:000001">
    <property type="entry name" value="50S ribosomal protein L16"/>
    <property type="match status" value="1"/>
</dbReference>
<dbReference type="Gene3D" id="3.90.1170.10">
    <property type="entry name" value="Ribosomal protein L10e/L16"/>
    <property type="match status" value="1"/>
</dbReference>
<dbReference type="HAMAP" id="MF_01342">
    <property type="entry name" value="Ribosomal_uL16"/>
    <property type="match status" value="1"/>
</dbReference>
<dbReference type="InterPro" id="IPR047873">
    <property type="entry name" value="Ribosomal_uL16"/>
</dbReference>
<dbReference type="InterPro" id="IPR000114">
    <property type="entry name" value="Ribosomal_uL16_bact-type"/>
</dbReference>
<dbReference type="InterPro" id="IPR020798">
    <property type="entry name" value="Ribosomal_uL16_CS"/>
</dbReference>
<dbReference type="InterPro" id="IPR016180">
    <property type="entry name" value="Ribosomal_uL16_dom"/>
</dbReference>
<dbReference type="InterPro" id="IPR036920">
    <property type="entry name" value="Ribosomal_uL16_sf"/>
</dbReference>
<dbReference type="NCBIfam" id="TIGR01164">
    <property type="entry name" value="rplP_bact"/>
    <property type="match status" value="1"/>
</dbReference>
<dbReference type="PANTHER" id="PTHR12220">
    <property type="entry name" value="50S/60S RIBOSOMAL PROTEIN L16"/>
    <property type="match status" value="1"/>
</dbReference>
<dbReference type="PANTHER" id="PTHR12220:SF13">
    <property type="entry name" value="LARGE RIBOSOMAL SUBUNIT PROTEIN UL16M"/>
    <property type="match status" value="1"/>
</dbReference>
<dbReference type="Pfam" id="PF00252">
    <property type="entry name" value="Ribosomal_L16"/>
    <property type="match status" value="1"/>
</dbReference>
<dbReference type="PRINTS" id="PR00060">
    <property type="entry name" value="RIBOSOMALL16"/>
</dbReference>
<dbReference type="SUPFAM" id="SSF54686">
    <property type="entry name" value="Ribosomal protein L16p/L10e"/>
    <property type="match status" value="1"/>
</dbReference>
<dbReference type="PROSITE" id="PS00586">
    <property type="entry name" value="RIBOSOMAL_L16_1"/>
    <property type="match status" value="1"/>
</dbReference>
<protein>
    <recommendedName>
        <fullName evidence="1">Large ribosomal subunit protein uL16</fullName>
    </recommendedName>
    <alternativeName>
        <fullName evidence="2">50S ribosomal protein L16</fullName>
    </alternativeName>
</protein>
<comment type="function">
    <text evidence="1">Binds 23S rRNA and is also seen to make contacts with the A and possibly P site tRNAs.</text>
</comment>
<comment type="subunit">
    <text evidence="1">Part of the 50S ribosomal subunit.</text>
</comment>
<comment type="similarity">
    <text evidence="1">Belongs to the universal ribosomal protein uL16 family.</text>
</comment>
<organism>
    <name type="scientific">Campylobacter concisus (strain 13826)</name>
    <dbReference type="NCBI Taxonomy" id="360104"/>
    <lineage>
        <taxon>Bacteria</taxon>
        <taxon>Pseudomonadati</taxon>
        <taxon>Campylobacterota</taxon>
        <taxon>Epsilonproteobacteria</taxon>
        <taxon>Campylobacterales</taxon>
        <taxon>Campylobacteraceae</taxon>
        <taxon>Campylobacter</taxon>
    </lineage>
</organism>
<accession>A7ZG05</accession>
<feature type="chain" id="PRO_1000054596" description="Large ribosomal subunit protein uL16">
    <location>
        <begin position="1"/>
        <end position="141"/>
    </location>
</feature>
<evidence type="ECO:0000255" key="1">
    <source>
        <dbReference type="HAMAP-Rule" id="MF_01342"/>
    </source>
</evidence>
<evidence type="ECO:0000305" key="2"/>